<organism>
    <name type="scientific">Pyrococcus furiosus (strain ATCC 43587 / DSM 3638 / JCM 8422 / Vc1)</name>
    <dbReference type="NCBI Taxonomy" id="186497"/>
    <lineage>
        <taxon>Archaea</taxon>
        <taxon>Methanobacteriati</taxon>
        <taxon>Methanobacteriota</taxon>
        <taxon>Thermococci</taxon>
        <taxon>Thermococcales</taxon>
        <taxon>Thermococcaceae</taxon>
        <taxon>Pyrococcus</taxon>
    </lineage>
</organism>
<reference key="1">
    <citation type="journal article" date="1999" name="Genetics">
        <title>Divergence of the hyperthermophilic archaea Pyrococcus furiosus and P. horikoshii inferred from complete genomic sequences.</title>
        <authorList>
            <person name="Maeder D.L."/>
            <person name="Weiss R.B."/>
            <person name="Dunn D.M."/>
            <person name="Cherry J.L."/>
            <person name="Gonzalez J.M."/>
            <person name="DiRuggiero J."/>
            <person name="Robb F.T."/>
        </authorList>
    </citation>
    <scope>NUCLEOTIDE SEQUENCE [LARGE SCALE GENOMIC DNA]</scope>
    <source>
        <strain>ATCC 43587 / DSM 3638 / JCM 8422 / Vc1</strain>
    </source>
</reference>
<accession>Q8U0P3</accession>
<proteinExistence type="inferred from homology"/>
<name>REG6_PYRFU</name>
<evidence type="ECO:0000250" key="1">
    <source>
        <dbReference type="UniProtKB" id="O59188"/>
    </source>
</evidence>
<evidence type="ECO:0000255" key="2">
    <source>
        <dbReference type="PROSITE-ProRule" id="PRU00319"/>
    </source>
</evidence>
<sequence>MRGILDDIDKKIIEILQKDGKVPLREISKITGLAESTIHERIKRLRESGVIKKFTAVVNPEALGYNILAFILIKVKAGKYSEVASKLVKYPEIVEVYETTGDYDMVVKIRTKNSEELNNFLDMVGSIEGVEGTHTMIVLKVHKETTELPVK</sequence>
<dbReference type="EMBL" id="AE009950">
    <property type="protein sequence ID" value="AAL81667.1"/>
    <property type="molecule type" value="Genomic_DNA"/>
</dbReference>
<dbReference type="RefSeq" id="WP_011012690.1">
    <property type="nucleotide sequence ID" value="NZ_CP023154.1"/>
</dbReference>
<dbReference type="SMR" id="Q8U0P3"/>
<dbReference type="STRING" id="186497.PF1543"/>
<dbReference type="PaxDb" id="186497-PF1543"/>
<dbReference type="KEGG" id="pfu:PF1543"/>
<dbReference type="PATRIC" id="fig|186497.12.peg.1609"/>
<dbReference type="eggNOG" id="arCOG01580">
    <property type="taxonomic scope" value="Archaea"/>
</dbReference>
<dbReference type="HOGENOM" id="CLU_091233_5_4_2"/>
<dbReference type="OrthoDB" id="6995at2157"/>
<dbReference type="PhylomeDB" id="Q8U0P3"/>
<dbReference type="Proteomes" id="UP000001013">
    <property type="component" value="Chromosome"/>
</dbReference>
<dbReference type="GO" id="GO:0005829">
    <property type="term" value="C:cytosol"/>
    <property type="evidence" value="ECO:0007669"/>
    <property type="project" value="TreeGrafter"/>
</dbReference>
<dbReference type="GO" id="GO:0043565">
    <property type="term" value="F:sequence-specific DNA binding"/>
    <property type="evidence" value="ECO:0007669"/>
    <property type="project" value="InterPro"/>
</dbReference>
<dbReference type="GO" id="GO:0043200">
    <property type="term" value="P:response to amino acid"/>
    <property type="evidence" value="ECO:0007669"/>
    <property type="project" value="TreeGrafter"/>
</dbReference>
<dbReference type="CDD" id="cd00090">
    <property type="entry name" value="HTH_ARSR"/>
    <property type="match status" value="1"/>
</dbReference>
<dbReference type="Gene3D" id="3.30.70.920">
    <property type="match status" value="1"/>
</dbReference>
<dbReference type="Gene3D" id="1.10.10.10">
    <property type="entry name" value="Winged helix-like DNA-binding domain superfamily/Winged helix DNA-binding domain"/>
    <property type="match status" value="1"/>
</dbReference>
<dbReference type="InterPro" id="IPR011991">
    <property type="entry name" value="ArsR-like_HTH"/>
</dbReference>
<dbReference type="InterPro" id="IPR000485">
    <property type="entry name" value="AsnC-type_HTH_dom"/>
</dbReference>
<dbReference type="InterPro" id="IPR011008">
    <property type="entry name" value="Dimeric_a/b-barrel"/>
</dbReference>
<dbReference type="InterPro" id="IPR019888">
    <property type="entry name" value="Tscrpt_reg_AsnC-like"/>
</dbReference>
<dbReference type="InterPro" id="IPR019887">
    <property type="entry name" value="Tscrpt_reg_AsnC/Lrp_C"/>
</dbReference>
<dbReference type="InterPro" id="IPR036388">
    <property type="entry name" value="WH-like_DNA-bd_sf"/>
</dbReference>
<dbReference type="InterPro" id="IPR036390">
    <property type="entry name" value="WH_DNA-bd_sf"/>
</dbReference>
<dbReference type="PANTHER" id="PTHR30154">
    <property type="entry name" value="LEUCINE-RESPONSIVE REGULATORY PROTEIN"/>
    <property type="match status" value="1"/>
</dbReference>
<dbReference type="PANTHER" id="PTHR30154:SF34">
    <property type="entry name" value="TRANSCRIPTIONAL REGULATOR AZLB"/>
    <property type="match status" value="1"/>
</dbReference>
<dbReference type="Pfam" id="PF01037">
    <property type="entry name" value="AsnC_trans_reg"/>
    <property type="match status" value="1"/>
</dbReference>
<dbReference type="Pfam" id="PF13412">
    <property type="entry name" value="HTH_24"/>
    <property type="match status" value="1"/>
</dbReference>
<dbReference type="PRINTS" id="PR00033">
    <property type="entry name" value="HTHASNC"/>
</dbReference>
<dbReference type="SMART" id="SM00344">
    <property type="entry name" value="HTH_ASNC"/>
    <property type="match status" value="1"/>
</dbReference>
<dbReference type="SUPFAM" id="SSF54909">
    <property type="entry name" value="Dimeric alpha+beta barrel"/>
    <property type="match status" value="1"/>
</dbReference>
<dbReference type="SUPFAM" id="SSF46785">
    <property type="entry name" value="Winged helix' DNA-binding domain"/>
    <property type="match status" value="1"/>
</dbReference>
<dbReference type="PROSITE" id="PS50956">
    <property type="entry name" value="HTH_ASNC_2"/>
    <property type="match status" value="1"/>
</dbReference>
<gene>
    <name evidence="1" type="primary">fl11</name>
    <name type="ordered locus">PF1543</name>
</gene>
<comment type="function">
    <text evidence="1">DNA-binding protein involved in the repression of transcription of a large number of genes, thereby arresting growth, in response to environmental changes.</text>
</comment>
<comment type="activity regulation">
    <text evidence="1">In the famine mode, FL11 forms dimers and acts as a repressor, leading to growth arrest. In the feast mode, in the presence of high concentrations of lysine or arginine, four dimers assemble into an octamer and cover the fl11 and lysine biosynthesis promoters. This leads to the inhibition of fl11 expression and lysine biosynthesis, decrease of the FL11 concentration in the cell, derepression of the target genes and activation of the metabolism.</text>
</comment>
<comment type="subunit">
    <text evidence="1">Homodimer. Binds DNA as a dimer and an octamer.</text>
</comment>
<feature type="chain" id="PRO_0000111768" description="HTH-type transcriptional regulator FL11">
    <location>
        <begin position="1"/>
        <end position="151"/>
    </location>
</feature>
<feature type="domain" description="HTH asnC-type" evidence="2">
    <location>
        <begin position="5"/>
        <end position="66"/>
    </location>
</feature>
<feature type="DNA-binding region" description="H-T-H motif" evidence="2">
    <location>
        <begin position="24"/>
        <end position="43"/>
    </location>
</feature>
<feature type="binding site" evidence="1">
    <location>
        <begin position="98"/>
        <end position="104"/>
    </location>
    <ligand>
        <name>L-arginine</name>
        <dbReference type="ChEBI" id="CHEBI:32682"/>
    </ligand>
</feature>
<feature type="binding site" evidence="1">
    <location>
        <position position="118"/>
    </location>
    <ligand>
        <name>L-lysine</name>
        <dbReference type="ChEBI" id="CHEBI:32551"/>
    </ligand>
</feature>
<feature type="binding site" evidence="1">
    <location>
        <position position="122"/>
    </location>
    <ligand>
        <name>L-arginine</name>
        <dbReference type="ChEBI" id="CHEBI:32682"/>
    </ligand>
</feature>
<feature type="binding site" evidence="1">
    <location>
        <position position="122"/>
    </location>
    <ligand>
        <name>L-lysine</name>
        <dbReference type="ChEBI" id="CHEBI:32551"/>
    </ligand>
</feature>
<feature type="binding site" evidence="1">
    <location>
        <begin position="133"/>
        <end position="135"/>
    </location>
    <ligand>
        <name>L-arginine</name>
        <dbReference type="ChEBI" id="CHEBI:32682"/>
    </ligand>
</feature>
<feature type="binding site" evidence="1">
    <location>
        <begin position="133"/>
        <end position="135"/>
    </location>
    <ligand>
        <name>L-lysine</name>
        <dbReference type="ChEBI" id="CHEBI:32551"/>
    </ligand>
</feature>
<keyword id="KW-0238">DNA-binding</keyword>
<keyword id="KW-1185">Reference proteome</keyword>
<keyword id="KW-0678">Repressor</keyword>
<keyword id="KW-0346">Stress response</keyword>
<keyword id="KW-0804">Transcription</keyword>
<keyword id="KW-0805">Transcription regulation</keyword>
<protein>
    <recommendedName>
        <fullName evidence="1">HTH-type transcriptional regulator FL11</fullName>
    </recommendedName>
    <alternativeName>
        <fullName evidence="1">Feast/famine regulatory protein FL11</fullName>
        <shortName evidence="1">FFRP FL11</shortName>
    </alternativeName>
</protein>